<evidence type="ECO:0000255" key="1">
    <source>
        <dbReference type="HAMAP-Rule" id="MF_00041"/>
    </source>
</evidence>
<accession>A3N0S3</accession>
<name>SYC_ACTP2</name>
<organism>
    <name type="scientific">Actinobacillus pleuropneumoniae serotype 5b (strain L20)</name>
    <dbReference type="NCBI Taxonomy" id="416269"/>
    <lineage>
        <taxon>Bacteria</taxon>
        <taxon>Pseudomonadati</taxon>
        <taxon>Pseudomonadota</taxon>
        <taxon>Gammaproteobacteria</taxon>
        <taxon>Pasteurellales</taxon>
        <taxon>Pasteurellaceae</taxon>
        <taxon>Actinobacillus</taxon>
    </lineage>
</organism>
<gene>
    <name evidence="1" type="primary">cysS</name>
    <name type="ordered locus">APL_0913</name>
</gene>
<proteinExistence type="inferred from homology"/>
<sequence>MLKIYNTLKREKEEFKPINPNQVGMYVCGVTVYDLCHFGHGRTFVSFDVIARYLRYLGYNLRYVRNITDVDDKIIKRALENNETCDQLVDRMIAEMHKDFDDLNILRPDVEPRATKHIPEIVAMVEKLIANGHAYVAADGDVMFDVESFKKYGALSRQNLEQLQAGARVEIKSVKKNPMDFVLWKMSKEGEPSWQSPWGNGRPGWHIECSAMNSKELGEHFDIHGGGSDLMFPHHENEIAQSCCAHGGDYVNYWLHTGMLTIDDEKMSKSLGNFFTIRTMLEKYESETLRYFFLTAHYRSLLNYSLDNLDLARSALERLYTSLRGCDLSVEVAGGEQYVEAFKAAMDDDFNTPGALAVLFEIAREVNKLKTEDMAKANGLAVRLKELAGVLGLLYQDPEAFLQGDADNDEVAEIEALIKQRNEAKAAKNWAVADEVRDKLKAMNIVLEDTPNGTTWRKA</sequence>
<feature type="chain" id="PRO_0000332781" description="Cysteine--tRNA ligase">
    <location>
        <begin position="1"/>
        <end position="459"/>
    </location>
</feature>
<feature type="short sequence motif" description="'HIGH' region">
    <location>
        <begin position="30"/>
        <end position="40"/>
    </location>
</feature>
<feature type="short sequence motif" description="'KMSKS' region">
    <location>
        <begin position="266"/>
        <end position="270"/>
    </location>
</feature>
<feature type="binding site" evidence="1">
    <location>
        <position position="28"/>
    </location>
    <ligand>
        <name>Zn(2+)</name>
        <dbReference type="ChEBI" id="CHEBI:29105"/>
    </ligand>
</feature>
<feature type="binding site" evidence="1">
    <location>
        <position position="209"/>
    </location>
    <ligand>
        <name>Zn(2+)</name>
        <dbReference type="ChEBI" id="CHEBI:29105"/>
    </ligand>
</feature>
<feature type="binding site" evidence="1">
    <location>
        <position position="234"/>
    </location>
    <ligand>
        <name>Zn(2+)</name>
        <dbReference type="ChEBI" id="CHEBI:29105"/>
    </ligand>
</feature>
<feature type="binding site" evidence="1">
    <location>
        <position position="238"/>
    </location>
    <ligand>
        <name>Zn(2+)</name>
        <dbReference type="ChEBI" id="CHEBI:29105"/>
    </ligand>
</feature>
<feature type="binding site" evidence="1">
    <location>
        <position position="269"/>
    </location>
    <ligand>
        <name>ATP</name>
        <dbReference type="ChEBI" id="CHEBI:30616"/>
    </ligand>
</feature>
<protein>
    <recommendedName>
        <fullName evidence="1">Cysteine--tRNA ligase</fullName>
        <ecNumber evidence="1">6.1.1.16</ecNumber>
    </recommendedName>
    <alternativeName>
        <fullName evidence="1">Cysteinyl-tRNA synthetase</fullName>
        <shortName evidence="1">CysRS</shortName>
    </alternativeName>
</protein>
<reference key="1">
    <citation type="journal article" date="2008" name="J. Bacteriol.">
        <title>The complete genome sequence of Actinobacillus pleuropneumoniae L20 (serotype 5b).</title>
        <authorList>
            <person name="Foote S.J."/>
            <person name="Bosse J.T."/>
            <person name="Bouevitch A.B."/>
            <person name="Langford P.R."/>
            <person name="Young N.M."/>
            <person name="Nash J.H.E."/>
        </authorList>
    </citation>
    <scope>NUCLEOTIDE SEQUENCE [LARGE SCALE GENOMIC DNA]</scope>
    <source>
        <strain>L20</strain>
    </source>
</reference>
<keyword id="KW-0030">Aminoacyl-tRNA synthetase</keyword>
<keyword id="KW-0067">ATP-binding</keyword>
<keyword id="KW-0963">Cytoplasm</keyword>
<keyword id="KW-0436">Ligase</keyword>
<keyword id="KW-0479">Metal-binding</keyword>
<keyword id="KW-0547">Nucleotide-binding</keyword>
<keyword id="KW-0648">Protein biosynthesis</keyword>
<keyword id="KW-1185">Reference proteome</keyword>
<keyword id="KW-0862">Zinc</keyword>
<comment type="catalytic activity">
    <reaction evidence="1">
        <text>tRNA(Cys) + L-cysteine + ATP = L-cysteinyl-tRNA(Cys) + AMP + diphosphate</text>
        <dbReference type="Rhea" id="RHEA:17773"/>
        <dbReference type="Rhea" id="RHEA-COMP:9661"/>
        <dbReference type="Rhea" id="RHEA-COMP:9679"/>
        <dbReference type="ChEBI" id="CHEBI:30616"/>
        <dbReference type="ChEBI" id="CHEBI:33019"/>
        <dbReference type="ChEBI" id="CHEBI:35235"/>
        <dbReference type="ChEBI" id="CHEBI:78442"/>
        <dbReference type="ChEBI" id="CHEBI:78517"/>
        <dbReference type="ChEBI" id="CHEBI:456215"/>
        <dbReference type="EC" id="6.1.1.16"/>
    </reaction>
</comment>
<comment type="cofactor">
    <cofactor evidence="1">
        <name>Zn(2+)</name>
        <dbReference type="ChEBI" id="CHEBI:29105"/>
    </cofactor>
    <text evidence="1">Binds 1 zinc ion per subunit.</text>
</comment>
<comment type="subunit">
    <text evidence="1">Monomer.</text>
</comment>
<comment type="subcellular location">
    <subcellularLocation>
        <location evidence="1">Cytoplasm</location>
    </subcellularLocation>
</comment>
<comment type="similarity">
    <text evidence="1">Belongs to the class-I aminoacyl-tRNA synthetase family.</text>
</comment>
<dbReference type="EC" id="6.1.1.16" evidence="1"/>
<dbReference type="EMBL" id="CP000569">
    <property type="protein sequence ID" value="ABN74009.1"/>
    <property type="molecule type" value="Genomic_DNA"/>
</dbReference>
<dbReference type="RefSeq" id="WP_009874636.1">
    <property type="nucleotide sequence ID" value="NC_009053.1"/>
</dbReference>
<dbReference type="SMR" id="A3N0S3"/>
<dbReference type="STRING" id="416269.APL_0913"/>
<dbReference type="EnsemblBacteria" id="ABN74009">
    <property type="protein sequence ID" value="ABN74009"/>
    <property type="gene ID" value="APL_0913"/>
</dbReference>
<dbReference type="KEGG" id="apl:APL_0913"/>
<dbReference type="PATRIC" id="fig|416269.6.peg.951"/>
<dbReference type="eggNOG" id="COG0215">
    <property type="taxonomic scope" value="Bacteria"/>
</dbReference>
<dbReference type="HOGENOM" id="CLU_013528_0_1_6"/>
<dbReference type="Proteomes" id="UP000001432">
    <property type="component" value="Chromosome"/>
</dbReference>
<dbReference type="GO" id="GO:0005829">
    <property type="term" value="C:cytosol"/>
    <property type="evidence" value="ECO:0007669"/>
    <property type="project" value="TreeGrafter"/>
</dbReference>
<dbReference type="GO" id="GO:0005524">
    <property type="term" value="F:ATP binding"/>
    <property type="evidence" value="ECO:0007669"/>
    <property type="project" value="UniProtKB-UniRule"/>
</dbReference>
<dbReference type="GO" id="GO:0004817">
    <property type="term" value="F:cysteine-tRNA ligase activity"/>
    <property type="evidence" value="ECO:0007669"/>
    <property type="project" value="UniProtKB-UniRule"/>
</dbReference>
<dbReference type="GO" id="GO:0008270">
    <property type="term" value="F:zinc ion binding"/>
    <property type="evidence" value="ECO:0007669"/>
    <property type="project" value="UniProtKB-UniRule"/>
</dbReference>
<dbReference type="GO" id="GO:0006423">
    <property type="term" value="P:cysteinyl-tRNA aminoacylation"/>
    <property type="evidence" value="ECO:0007669"/>
    <property type="project" value="UniProtKB-UniRule"/>
</dbReference>
<dbReference type="CDD" id="cd07963">
    <property type="entry name" value="Anticodon_Ia_Cys"/>
    <property type="match status" value="1"/>
</dbReference>
<dbReference type="CDD" id="cd00672">
    <property type="entry name" value="CysRS_core"/>
    <property type="match status" value="1"/>
</dbReference>
<dbReference type="FunFam" id="3.40.50.620:FF:000009">
    <property type="entry name" value="Cysteine--tRNA ligase"/>
    <property type="match status" value="1"/>
</dbReference>
<dbReference type="Gene3D" id="1.20.120.1910">
    <property type="entry name" value="Cysteine-tRNA ligase, C-terminal anti-codon recognition domain"/>
    <property type="match status" value="1"/>
</dbReference>
<dbReference type="Gene3D" id="3.40.50.620">
    <property type="entry name" value="HUPs"/>
    <property type="match status" value="1"/>
</dbReference>
<dbReference type="HAMAP" id="MF_00041">
    <property type="entry name" value="Cys_tRNA_synth"/>
    <property type="match status" value="1"/>
</dbReference>
<dbReference type="InterPro" id="IPR015803">
    <property type="entry name" value="Cys-tRNA-ligase"/>
</dbReference>
<dbReference type="InterPro" id="IPR015273">
    <property type="entry name" value="Cys-tRNA-synt_Ia_DALR"/>
</dbReference>
<dbReference type="InterPro" id="IPR024909">
    <property type="entry name" value="Cys-tRNA/MSH_ligase"/>
</dbReference>
<dbReference type="InterPro" id="IPR056411">
    <property type="entry name" value="CysS_C"/>
</dbReference>
<dbReference type="InterPro" id="IPR014729">
    <property type="entry name" value="Rossmann-like_a/b/a_fold"/>
</dbReference>
<dbReference type="InterPro" id="IPR032678">
    <property type="entry name" value="tRNA-synt_1_cat_dom"/>
</dbReference>
<dbReference type="InterPro" id="IPR009080">
    <property type="entry name" value="tRNAsynth_Ia_anticodon-bd"/>
</dbReference>
<dbReference type="NCBIfam" id="TIGR00435">
    <property type="entry name" value="cysS"/>
    <property type="match status" value="1"/>
</dbReference>
<dbReference type="PANTHER" id="PTHR10890:SF3">
    <property type="entry name" value="CYSTEINE--TRNA LIGASE, CYTOPLASMIC"/>
    <property type="match status" value="1"/>
</dbReference>
<dbReference type="PANTHER" id="PTHR10890">
    <property type="entry name" value="CYSTEINYL-TRNA SYNTHETASE"/>
    <property type="match status" value="1"/>
</dbReference>
<dbReference type="Pfam" id="PF23493">
    <property type="entry name" value="CysS_C"/>
    <property type="match status" value="1"/>
</dbReference>
<dbReference type="Pfam" id="PF09190">
    <property type="entry name" value="DALR_2"/>
    <property type="match status" value="1"/>
</dbReference>
<dbReference type="Pfam" id="PF01406">
    <property type="entry name" value="tRNA-synt_1e"/>
    <property type="match status" value="1"/>
</dbReference>
<dbReference type="PRINTS" id="PR00983">
    <property type="entry name" value="TRNASYNTHCYS"/>
</dbReference>
<dbReference type="SMART" id="SM00840">
    <property type="entry name" value="DALR_2"/>
    <property type="match status" value="1"/>
</dbReference>
<dbReference type="SUPFAM" id="SSF47323">
    <property type="entry name" value="Anticodon-binding domain of a subclass of class I aminoacyl-tRNA synthetases"/>
    <property type="match status" value="1"/>
</dbReference>
<dbReference type="SUPFAM" id="SSF52374">
    <property type="entry name" value="Nucleotidylyl transferase"/>
    <property type="match status" value="1"/>
</dbReference>